<gene>
    <name evidence="10" type="primary">SERA3</name>
    <name evidence="11" type="ORF">PBANKA_0304900</name>
</gene>
<organism evidence="12">
    <name type="scientific">Plasmodium berghei (strain Anka)</name>
    <dbReference type="NCBI Taxonomy" id="5823"/>
    <lineage>
        <taxon>Eukaryota</taxon>
        <taxon>Sar</taxon>
        <taxon>Alveolata</taxon>
        <taxon>Apicomplexa</taxon>
        <taxon>Aconoidasida</taxon>
        <taxon>Haemosporida</taxon>
        <taxon>Plasmodiidae</taxon>
        <taxon>Plasmodium</taxon>
        <taxon>Plasmodium (Vinckeia)</taxon>
    </lineage>
</organism>
<name>SERA3_PLABA</name>
<reference evidence="12" key="1">
    <citation type="journal article" date="2014" name="BMC Biol.">
        <title>A comprehensive evaluation of rodent malaria parasite genomes and gene expression.</title>
        <authorList>
            <person name="Otto T.D."/>
            <person name="Bohme U."/>
            <person name="Jackson A.P."/>
            <person name="Hunt M."/>
            <person name="Franke-Fayard B."/>
            <person name="Hoeijmakers W.A."/>
            <person name="Religa A.A."/>
            <person name="Robertson L."/>
            <person name="Sanders M."/>
            <person name="Ogun S.A."/>
            <person name="Cunningham D."/>
            <person name="Erhart A."/>
            <person name="Billker O."/>
            <person name="Khan S.M."/>
            <person name="Stunnenberg H.G."/>
            <person name="Langhorne J."/>
            <person name="Holder A.A."/>
            <person name="Waters A.P."/>
            <person name="Newbold C.I."/>
            <person name="Pain A."/>
            <person name="Berriman M."/>
            <person name="Janse C.J."/>
        </authorList>
    </citation>
    <scope>NUCLEOTIDE SEQUENCE [LARGE SCALE GENOMIC DNA]</scope>
    <source>
        <strain evidence="12">ANKA</strain>
    </source>
</reference>
<reference evidence="10" key="2">
    <citation type="journal article" date="2008" name="Cell. Microbiol.">
        <title>Expression and processing of Plasmodium berghei SERA3 during liver stages.</title>
        <authorList>
            <person name="Schmidt-Christensen A."/>
            <person name="Sturm A."/>
            <person name="Horstmann S."/>
            <person name="Heussler V.T."/>
        </authorList>
    </citation>
    <scope>SUBCELLULAR LOCATION</scope>
    <scope>DEVELOPMENTAL STAGE</scope>
</reference>
<reference evidence="10" key="3">
    <citation type="journal article" date="2013" name="J. Biol. Chem.">
        <title>A key role for Plasmodium subtilisin-like SUB1 protease in egress of malaria parasites from host hepatocytes.</title>
        <authorList>
            <person name="Tawk L."/>
            <person name="Lacroix C."/>
            <person name="Gueirard P."/>
            <person name="Kent R."/>
            <person name="Gorgette O."/>
            <person name="Thiberge S."/>
            <person name="Mercereau-Puijalon O."/>
            <person name="Menard R."/>
            <person name="Barale J.C."/>
        </authorList>
    </citation>
    <scope>PROTEOLYTIC CLEAVAGE</scope>
</reference>
<reference evidence="10" key="4">
    <citation type="journal article" date="2019" name="Cell. Microbiol.">
        <title>The Plasmodium berghei serine protease PbSUB1 plays an important role in male gamete egress.</title>
        <authorList>
            <person name="Pace T."/>
            <person name="Grasso F."/>
            <person name="Camarda G."/>
            <person name="Suarez C."/>
            <person name="Blackman M.J."/>
            <person name="Ponzi M."/>
            <person name="Olivieri A."/>
        </authorList>
    </citation>
    <scope>FUNCTION</scope>
    <scope>DEVELOPMENTAL STAGE</scope>
    <scope>PROTEOLYTIC CLEAVAGE</scope>
</reference>
<evidence type="ECO:0000250" key="1">
    <source>
        <dbReference type="UniProtKB" id="Q9TY95"/>
    </source>
</evidence>
<evidence type="ECO:0000255" key="2"/>
<evidence type="ECO:0000255" key="3">
    <source>
        <dbReference type="PROSITE-ProRule" id="PRU00498"/>
    </source>
</evidence>
<evidence type="ECO:0000256" key="4">
    <source>
        <dbReference type="SAM" id="MobiDB-lite"/>
    </source>
</evidence>
<evidence type="ECO:0000269" key="5">
    <source>
    </source>
</evidence>
<evidence type="ECO:0000269" key="6">
    <source>
    </source>
</evidence>
<evidence type="ECO:0000269" key="7">
    <source>
    </source>
</evidence>
<evidence type="ECO:0000303" key="8">
    <source>
    </source>
</evidence>
<evidence type="ECO:0000303" key="9">
    <source>
    </source>
</evidence>
<evidence type="ECO:0000305" key="10"/>
<evidence type="ECO:0000312" key="11">
    <source>
        <dbReference type="EMBL" id="VUC54088.1"/>
    </source>
</evidence>
<evidence type="ECO:0000312" key="12">
    <source>
        <dbReference type="Proteomes" id="UP000074855"/>
    </source>
</evidence>
<accession>A0A509AC44</accession>
<feature type="signal peptide" evidence="2">
    <location>
        <begin position="1"/>
        <end position="21"/>
    </location>
</feature>
<feature type="chain" id="PRO_5021246088" description="Serine-repeat antigen protein 3" evidence="2">
    <location>
        <begin position="22"/>
        <end position="1096"/>
    </location>
</feature>
<feature type="region of interest" description="Disordered" evidence="4">
    <location>
        <begin position="28"/>
        <end position="205"/>
    </location>
</feature>
<feature type="region of interest" description="Disordered" evidence="4">
    <location>
        <begin position="916"/>
        <end position="952"/>
    </location>
</feature>
<feature type="region of interest" description="Disordered" evidence="4">
    <location>
        <begin position="964"/>
        <end position="1006"/>
    </location>
</feature>
<feature type="compositionally biased region" description="Low complexity" evidence="4">
    <location>
        <begin position="77"/>
        <end position="97"/>
    </location>
</feature>
<feature type="compositionally biased region" description="Basic and acidic residues" evidence="4">
    <location>
        <begin position="102"/>
        <end position="113"/>
    </location>
</feature>
<feature type="compositionally biased region" description="Polar residues" evidence="4">
    <location>
        <begin position="123"/>
        <end position="147"/>
    </location>
</feature>
<feature type="compositionally biased region" description="Basic and acidic residues" evidence="4">
    <location>
        <begin position="149"/>
        <end position="161"/>
    </location>
</feature>
<feature type="compositionally biased region" description="Polar residues" evidence="4">
    <location>
        <begin position="925"/>
        <end position="952"/>
    </location>
</feature>
<feature type="compositionally biased region" description="Polar residues" evidence="4">
    <location>
        <begin position="964"/>
        <end position="975"/>
    </location>
</feature>
<feature type="compositionally biased region" description="Low complexity" evidence="4">
    <location>
        <begin position="976"/>
        <end position="1006"/>
    </location>
</feature>
<feature type="glycosylation site" description="N-linked (GlcNAc...) asparagine" evidence="3">
    <location>
        <position position="92"/>
    </location>
</feature>
<feature type="glycosylation site" description="N-linked (GlcNAc...) asparagine" evidence="3">
    <location>
        <position position="204"/>
    </location>
</feature>
<feature type="glycosylation site" description="N-linked (GlcNAc...) asparagine" evidence="3">
    <location>
        <position position="607"/>
    </location>
</feature>
<feature type="glycosylation site" description="N-linked (GlcNAc...) asparagine" evidence="3">
    <location>
        <position position="637"/>
    </location>
</feature>
<feature type="glycosylation site" description="N-linked (GlcNAc...) asparagine" evidence="3">
    <location>
        <position position="662"/>
    </location>
</feature>
<feature type="glycosylation site" description="N-linked (GlcNAc...) asparagine" evidence="3">
    <location>
        <position position="671"/>
    </location>
</feature>
<feature type="glycosylation site" description="N-linked (GlcNAc...) asparagine" evidence="3">
    <location>
        <position position="712"/>
    </location>
</feature>
<feature type="glycosylation site" description="N-linked (GlcNAc...) asparagine" evidence="3">
    <location>
        <position position="892"/>
    </location>
</feature>
<feature type="glycosylation site" description="N-linked (GlcNAc...) asparagine" evidence="3">
    <location>
        <position position="951"/>
    </location>
</feature>
<feature type="glycosylation site" description="N-linked (GlcNAc...) asparagine" evidence="3">
    <location>
        <position position="981"/>
    </location>
</feature>
<feature type="glycosylation site" description="N-linked (GlcNAc...) asparagine" evidence="3">
    <location>
        <position position="1039"/>
    </location>
</feature>
<protein>
    <recommendedName>
        <fullName evidence="10">Serine-repeat antigen protein 3</fullName>
    </recommendedName>
    <alternativeName>
        <fullName evidence="9">Serine repeat antigen 3</fullName>
        <shortName evidence="8 9">PbSERA3</shortName>
    </alternativeName>
</protein>
<keyword id="KW-1003">Cell membrane</keyword>
<keyword id="KW-0325">Glycoprotein</keyword>
<keyword id="KW-1035">Host cytoplasm</keyword>
<keyword id="KW-0472">Membrane</keyword>
<keyword id="KW-1185">Reference proteome</keyword>
<keyword id="KW-0964">Secreted</keyword>
<keyword id="KW-0732">Signal</keyword>
<keyword id="KW-0865">Zymogen</keyword>
<dbReference type="EMBL" id="LK023118">
    <property type="protein sequence ID" value="VUC54088.1"/>
    <property type="molecule type" value="Genomic_DNA"/>
</dbReference>
<dbReference type="FunCoup" id="A0A509AC44">
    <property type="interactions" value="3"/>
</dbReference>
<dbReference type="STRING" id="5823.A0A509AC44"/>
<dbReference type="VEuPathDB" id="PlasmoDB:PBANKA_0304900"/>
<dbReference type="InParanoid" id="A0A509AC44"/>
<dbReference type="OMA" id="YEYCDRW"/>
<dbReference type="OrthoDB" id="240131at2759"/>
<dbReference type="Proteomes" id="UP000074855">
    <property type="component" value="Chromosome 3"/>
</dbReference>
<dbReference type="GO" id="GO:0005886">
    <property type="term" value="C:plasma membrane"/>
    <property type="evidence" value="ECO:0007669"/>
    <property type="project" value="UniProtKB-SubCell"/>
</dbReference>
<dbReference type="GO" id="GO:0020003">
    <property type="term" value="C:symbiont-containing vacuole"/>
    <property type="evidence" value="ECO:0007669"/>
    <property type="project" value="UniProtKB-SubCell"/>
</dbReference>
<dbReference type="GO" id="GO:0008234">
    <property type="term" value="F:cysteine-type peptidase activity"/>
    <property type="evidence" value="ECO:0007669"/>
    <property type="project" value="InterPro"/>
</dbReference>
<dbReference type="GO" id="GO:0006508">
    <property type="term" value="P:proteolysis"/>
    <property type="evidence" value="ECO:0007669"/>
    <property type="project" value="InterPro"/>
</dbReference>
<dbReference type="CDD" id="cd02619">
    <property type="entry name" value="Peptidase_C1"/>
    <property type="match status" value="1"/>
</dbReference>
<dbReference type="Gene3D" id="3.90.70.10">
    <property type="entry name" value="Cysteine proteinases"/>
    <property type="match status" value="1"/>
</dbReference>
<dbReference type="InterPro" id="IPR038765">
    <property type="entry name" value="Papain-like_cys_pep_sf"/>
</dbReference>
<dbReference type="InterPro" id="IPR013128">
    <property type="entry name" value="Peptidase_C1A"/>
</dbReference>
<dbReference type="InterPro" id="IPR000668">
    <property type="entry name" value="Peptidase_C1A_C"/>
</dbReference>
<dbReference type="PANTHER" id="PTHR12411">
    <property type="entry name" value="CYSTEINE PROTEASE FAMILY C1-RELATED"/>
    <property type="match status" value="1"/>
</dbReference>
<dbReference type="Pfam" id="PF00112">
    <property type="entry name" value="Peptidase_C1"/>
    <property type="match status" value="1"/>
</dbReference>
<dbReference type="SMART" id="SM00645">
    <property type="entry name" value="Pept_C1"/>
    <property type="match status" value="1"/>
</dbReference>
<dbReference type="SUPFAM" id="SSF54001">
    <property type="entry name" value="Cysteine proteinases"/>
    <property type="match status" value="1"/>
</dbReference>
<comment type="function">
    <text evidence="7 9">Putative cysteine protease (PubMed:30941868). Probably involved in merozoite release from the parasitophorous vacuole during liver stages (PubMed:30941868).</text>
</comment>
<comment type="subcellular location">
    <subcellularLocation>
        <location evidence="1">Cell membrane</location>
        <topology evidence="1">Peripheral membrane protein</topology>
    </subcellularLocation>
    <subcellularLocation>
        <location evidence="1">Parasitophorous vacuole</location>
    </subcellularLocation>
    <subcellularLocation>
        <location evidence="1">Secreted</location>
    </subcellularLocation>
    <subcellularLocation>
        <location evidence="5">Host cytoplasm</location>
    </subcellularLocation>
</comment>
<comment type="developmental stage">
    <text evidence="5 7">Expressed in blood schizonts (at protein level) (PubMed:30941868). Expressed in female gametocytes (at protein level) (PubMed:30941868). Expressed in male gametocytes (at protein level) (PubMed:30941868). Up-regulated in late liver stages (at protein level) (PubMed:18419771). Not detected in oocysts and salivary gland sporozoites (PubMed:18419771).</text>
</comment>
<comment type="PTM">
    <text evidence="6 7">Proteolytically cleaved in both blood and liver stage parasites (PubMed:30941868). Precursor of 130 kDa is processed into 72 kDa and 55 kDa forms (PubMed:24089525, PubMed:30941868). Proteolytically cleaved by SUB1 (PubMed:24089525, PubMed:30941868).</text>
</comment>
<comment type="similarity">
    <text evidence="10">Belongs to the peptidase C1 family.</text>
</comment>
<sequence length="1096" mass="123202">MARLSSIVFIICLLLCNNAISDEVIESPSSGGTLSGGGSGTDTVTGTQDGKGKSEGKGNEGGQTDQKGKENPENGQNSDSTGDSSLGSTGSNGSQPAPTTPKEPEPTTPKEPESATPKASEPVTPQKTAETASGKQVSPTPSENPPSKDTPKPESSSEKKVNSALATPPAPEVSKAQEGAGLATQKEQTPSKRAKRSPPPQVNNITDMESYLMKNYDGVKVIGLCGVYFRVQFSPHLLLYGLTTFSIIQIEPFFEGVRIDFEHQHPIRNKCAPGKAFAFISYVKDNILILKWKVFAPPSDLFANDEVSKQILSAVSVTSDAESSVVDVRKYRLPQLDRPFTSIQVYKANPKQGLLETKNYILKNAIPEKCSKISMNCFLNGNVNIENCFKCTLLVQNAKPTDECFQYLPSDMKNNLNEIKVTAQSDEDSKENDLIESIEILLNSFYKADKKAKKLSLITMDDFDDVLRAELFNYCKLLKELDTKKTLENAELGNEIDIFNNLLRLLKTNEEESKHNLYKKLRNTAICLKDVNKWAEKKRGLILPEEVTQDQMAIGQNEEPYDEDPDDRVDLLELFDDNQNENIVDKDGIIDMSIAIKYAKLKSPYFNSSKYCNYEYCDRWQDKTSCISNIDVEEQGNCSLCWLFASKLHLETIRCMRGYGHNRSSALYVANCSKRTAEEICNDGSNPLEFLKILEKNKFLPLESNYPYLWKNVSGKCPNPQNDWTNLWGNTKLLYNNMFGQFIKHRGYIVYSSRFFAKNMNVFIDIIKREIRNKGSVIAYIKTQGVIDYDFNGRYISNICGHNHPDHAVNIIGYGNYISESGEKRSYWLIRNSWGYYWGHEGNFKVDVLGPDNCVHNVIHTAIVFKIDMEPDSDSNNNNAIKNRDQLIDEDNKSYFPQLSSNFYHSLYYNNYEGYEAKNDDENDQNYGNLDVSGQSENHQNDPKNPQPQANSTVTQLGVCPAENQRTADSNPNAQSTPSPNTTVTDTVNSNTANSNTANSNTASANAASIEKKIQILHVLKHIEKYKMTRGFVKYDNLNDTKNDYTCARSYSYDPKNHNECKQFCEENWERCKNHYSPGYCLTTLSGKNKCLFCYV</sequence>
<proteinExistence type="evidence at protein level"/>